<keyword id="KW-0238">DNA-binding</keyword>
<keyword id="KW-0371">Homeobox</keyword>
<keyword id="KW-0479">Metal-binding</keyword>
<keyword id="KW-0539">Nucleus</keyword>
<keyword id="KW-1185">Reference proteome</keyword>
<keyword id="KW-0804">Transcription</keyword>
<keyword id="KW-0805">Transcription regulation</keyword>
<keyword id="KW-0862">Zinc</keyword>
<keyword id="KW-0863">Zinc-finger</keyword>
<evidence type="ECO:0000250" key="1"/>
<evidence type="ECO:0000255" key="2">
    <source>
        <dbReference type="PROSITE-ProRule" id="PRU00856"/>
    </source>
</evidence>
<evidence type="ECO:0000256" key="3">
    <source>
        <dbReference type="SAM" id="MobiDB-lite"/>
    </source>
</evidence>
<feature type="chain" id="PRO_0000426041" description="Zinc-finger homeodomain protein 5">
    <location>
        <begin position="1"/>
        <end position="232"/>
    </location>
</feature>
<feature type="zinc finger region" description="ZF-HD dimerization-type; degenerate" evidence="2">
    <location>
        <begin position="40"/>
        <end position="86"/>
    </location>
</feature>
<feature type="DNA-binding region" description="Homeobox">
    <location>
        <begin position="159"/>
        <end position="222"/>
    </location>
</feature>
<feature type="region of interest" description="Disordered" evidence="3">
    <location>
        <begin position="1"/>
        <end position="25"/>
    </location>
</feature>
<feature type="region of interest" description="Disordered" evidence="3">
    <location>
        <begin position="126"/>
        <end position="170"/>
    </location>
</feature>
<feature type="compositionally biased region" description="Acidic residues" evidence="3">
    <location>
        <begin position="1"/>
        <end position="11"/>
    </location>
</feature>
<feature type="site" description="Required for DNA-binding" evidence="1">
    <location>
        <position position="211"/>
    </location>
</feature>
<gene>
    <name type="primary">ZHD5</name>
    <name type="ordered locus">Os01g0635550</name>
    <name type="ordered locus">LOC_Os01g44430</name>
    <name type="ORF">OSJNOa234E14.10</name>
</gene>
<organism>
    <name type="scientific">Oryza sativa subsp. japonica</name>
    <name type="common">Rice</name>
    <dbReference type="NCBI Taxonomy" id="39947"/>
    <lineage>
        <taxon>Eukaryota</taxon>
        <taxon>Viridiplantae</taxon>
        <taxon>Streptophyta</taxon>
        <taxon>Embryophyta</taxon>
        <taxon>Tracheophyta</taxon>
        <taxon>Spermatophyta</taxon>
        <taxon>Magnoliopsida</taxon>
        <taxon>Liliopsida</taxon>
        <taxon>Poales</taxon>
        <taxon>Poaceae</taxon>
        <taxon>BOP clade</taxon>
        <taxon>Oryzoideae</taxon>
        <taxon>Oryzeae</taxon>
        <taxon>Oryzinae</taxon>
        <taxon>Oryza</taxon>
        <taxon>Oryza sativa</taxon>
    </lineage>
</organism>
<dbReference type="EMBL" id="AP007251">
    <property type="protein sequence ID" value="BAD69443.1"/>
    <property type="molecule type" value="Genomic_DNA"/>
</dbReference>
<dbReference type="EMBL" id="AP008207">
    <property type="protein sequence ID" value="BAH91207.1"/>
    <property type="molecule type" value="Genomic_DNA"/>
</dbReference>
<dbReference type="EMBL" id="AP014957">
    <property type="protein sequence ID" value="BAS73332.1"/>
    <property type="molecule type" value="Genomic_DNA"/>
</dbReference>
<dbReference type="RefSeq" id="XP_015622498.1">
    <property type="nucleotide sequence ID" value="XM_015767012.1"/>
</dbReference>
<dbReference type="RefSeq" id="XP_015622499.1">
    <property type="nucleotide sequence ID" value="XM_015767013.1"/>
</dbReference>
<dbReference type="SMR" id="Q5VM82"/>
<dbReference type="FunCoup" id="Q5VM82">
    <property type="interactions" value="15"/>
</dbReference>
<dbReference type="STRING" id="39947.Q5VM82"/>
<dbReference type="PaxDb" id="39947-Q5VM82"/>
<dbReference type="EnsemblPlants" id="Os01t0635550-00">
    <property type="protein sequence ID" value="Os01t0635550-00"/>
    <property type="gene ID" value="Os01g0635550"/>
</dbReference>
<dbReference type="GeneID" id="9268901"/>
<dbReference type="Gramene" id="Os01t0635550-00">
    <property type="protein sequence ID" value="Os01t0635550-00"/>
    <property type="gene ID" value="Os01g0635550"/>
</dbReference>
<dbReference type="KEGG" id="dosa:Os01g0635550"/>
<dbReference type="KEGG" id="osa:9268901"/>
<dbReference type="eggNOG" id="ENOG502QZSB">
    <property type="taxonomic scope" value="Eukaryota"/>
</dbReference>
<dbReference type="HOGENOM" id="CLU_039237_2_2_1"/>
<dbReference type="InParanoid" id="Q5VM82"/>
<dbReference type="OMA" id="TRCRYHE"/>
<dbReference type="OrthoDB" id="636896at2759"/>
<dbReference type="Proteomes" id="UP000000763">
    <property type="component" value="Chromosome 1"/>
</dbReference>
<dbReference type="Proteomes" id="UP000059680">
    <property type="component" value="Chromosome 1"/>
</dbReference>
<dbReference type="GO" id="GO:0005634">
    <property type="term" value="C:nucleus"/>
    <property type="evidence" value="ECO:0000318"/>
    <property type="project" value="GO_Central"/>
</dbReference>
<dbReference type="GO" id="GO:0003700">
    <property type="term" value="F:DNA-binding transcription factor activity"/>
    <property type="evidence" value="ECO:0000318"/>
    <property type="project" value="GO_Central"/>
</dbReference>
<dbReference type="GO" id="GO:0000976">
    <property type="term" value="F:transcription cis-regulatory region binding"/>
    <property type="evidence" value="ECO:0000318"/>
    <property type="project" value="GO_Central"/>
</dbReference>
<dbReference type="GO" id="GO:0008270">
    <property type="term" value="F:zinc ion binding"/>
    <property type="evidence" value="ECO:0007669"/>
    <property type="project" value="UniProtKB-KW"/>
</dbReference>
<dbReference type="GO" id="GO:0006355">
    <property type="term" value="P:regulation of DNA-templated transcription"/>
    <property type="evidence" value="ECO:0000318"/>
    <property type="project" value="GO_Central"/>
</dbReference>
<dbReference type="FunFam" id="1.10.10.60:FF:000257">
    <property type="entry name" value="Zinc-finger homeodomain protein 2"/>
    <property type="match status" value="1"/>
</dbReference>
<dbReference type="Gene3D" id="1.10.10.60">
    <property type="entry name" value="Homeodomain-like"/>
    <property type="match status" value="1"/>
</dbReference>
<dbReference type="InterPro" id="IPR009057">
    <property type="entry name" value="Homeodomain-like_sf"/>
</dbReference>
<dbReference type="InterPro" id="IPR006455">
    <property type="entry name" value="Homeodomain_ZF_HD"/>
</dbReference>
<dbReference type="InterPro" id="IPR006456">
    <property type="entry name" value="ZF_HD_homeobox_Cys/His_dimer"/>
</dbReference>
<dbReference type="NCBIfam" id="TIGR01565">
    <property type="entry name" value="homeo_ZF_HD"/>
    <property type="match status" value="1"/>
</dbReference>
<dbReference type="NCBIfam" id="TIGR01566">
    <property type="entry name" value="ZF_HD_prot_N"/>
    <property type="match status" value="1"/>
</dbReference>
<dbReference type="PANTHER" id="PTHR31948">
    <property type="entry name" value="ZINC-FINGER HOMEODOMAIN PROTEIN 2"/>
    <property type="match status" value="1"/>
</dbReference>
<dbReference type="PANTHER" id="PTHR31948:SF95">
    <property type="entry name" value="ZINC-FINGER HOMEODOMAIN PROTEIN 5"/>
    <property type="match status" value="1"/>
</dbReference>
<dbReference type="Pfam" id="PF04770">
    <property type="entry name" value="ZF-HD_dimer"/>
    <property type="match status" value="1"/>
</dbReference>
<dbReference type="SUPFAM" id="SSF46689">
    <property type="entry name" value="Homeodomain-like"/>
    <property type="match status" value="1"/>
</dbReference>
<dbReference type="PROSITE" id="PS51523">
    <property type="entry name" value="ZF_HD_DIMER"/>
    <property type="match status" value="1"/>
</dbReference>
<protein>
    <recommendedName>
        <fullName>Zinc-finger homeodomain protein 5</fullName>
        <shortName>OsZHD5</shortName>
    </recommendedName>
</protein>
<comment type="function">
    <text evidence="1">Putative transcription factor.</text>
</comment>
<comment type="subunit">
    <text evidence="1">Homo- and heterodimer with other ZFHD proteins.</text>
</comment>
<comment type="subcellular location">
    <subcellularLocation>
        <location evidence="1">Nucleus</location>
    </subcellularLocation>
</comment>
<comment type="domain">
    <text>The homeodomain differs form the typical one by having namely 4 instead of 3 extra amino acids inserted in the loop between helix 1 and helix 2.</text>
</comment>
<reference key="1">
    <citation type="journal article" date="2002" name="Nature">
        <title>The genome sequence and structure of rice chromosome 1.</title>
        <authorList>
            <person name="Sasaki T."/>
            <person name="Matsumoto T."/>
            <person name="Yamamoto K."/>
            <person name="Sakata K."/>
            <person name="Baba T."/>
            <person name="Katayose Y."/>
            <person name="Wu J."/>
            <person name="Niimura Y."/>
            <person name="Cheng Z."/>
            <person name="Nagamura Y."/>
            <person name="Antonio B.A."/>
            <person name="Kanamori H."/>
            <person name="Hosokawa S."/>
            <person name="Masukawa M."/>
            <person name="Arikawa K."/>
            <person name="Chiden Y."/>
            <person name="Hayashi M."/>
            <person name="Okamoto M."/>
            <person name="Ando T."/>
            <person name="Aoki H."/>
            <person name="Arita K."/>
            <person name="Hamada M."/>
            <person name="Harada C."/>
            <person name="Hijishita S."/>
            <person name="Honda M."/>
            <person name="Ichikawa Y."/>
            <person name="Idonuma A."/>
            <person name="Iijima M."/>
            <person name="Ikeda M."/>
            <person name="Ikeno M."/>
            <person name="Ito S."/>
            <person name="Ito T."/>
            <person name="Ito Y."/>
            <person name="Ito Y."/>
            <person name="Iwabuchi A."/>
            <person name="Kamiya K."/>
            <person name="Karasawa W."/>
            <person name="Katagiri S."/>
            <person name="Kikuta A."/>
            <person name="Kobayashi N."/>
            <person name="Kono I."/>
            <person name="Machita K."/>
            <person name="Maehara T."/>
            <person name="Mizuno H."/>
            <person name="Mizubayashi T."/>
            <person name="Mukai Y."/>
            <person name="Nagasaki H."/>
            <person name="Nakashima M."/>
            <person name="Nakama Y."/>
            <person name="Nakamichi Y."/>
            <person name="Nakamura M."/>
            <person name="Namiki N."/>
            <person name="Negishi M."/>
            <person name="Ohta I."/>
            <person name="Ono N."/>
            <person name="Saji S."/>
            <person name="Sakai K."/>
            <person name="Shibata M."/>
            <person name="Shimokawa T."/>
            <person name="Shomura A."/>
            <person name="Song J."/>
            <person name="Takazaki Y."/>
            <person name="Terasawa K."/>
            <person name="Tsuji K."/>
            <person name="Waki K."/>
            <person name="Yamagata H."/>
            <person name="Yamane H."/>
            <person name="Yoshiki S."/>
            <person name="Yoshihara R."/>
            <person name="Yukawa K."/>
            <person name="Zhong H."/>
            <person name="Iwama H."/>
            <person name="Endo T."/>
            <person name="Ito H."/>
            <person name="Hahn J.H."/>
            <person name="Kim H.-I."/>
            <person name="Eun M.-Y."/>
            <person name="Yano M."/>
            <person name="Jiang J."/>
            <person name="Gojobori T."/>
        </authorList>
    </citation>
    <scope>NUCLEOTIDE SEQUENCE [LARGE SCALE GENOMIC DNA]</scope>
    <source>
        <strain>cv. Nipponbare</strain>
    </source>
</reference>
<reference key="2">
    <citation type="journal article" date="2005" name="Nature">
        <title>The map-based sequence of the rice genome.</title>
        <authorList>
            <consortium name="International rice genome sequencing project (IRGSP)"/>
        </authorList>
    </citation>
    <scope>NUCLEOTIDE SEQUENCE [LARGE SCALE GENOMIC DNA]</scope>
    <source>
        <strain>cv. Nipponbare</strain>
    </source>
</reference>
<reference key="3">
    <citation type="journal article" date="2008" name="Nucleic Acids Res.">
        <title>The rice annotation project database (RAP-DB): 2008 update.</title>
        <authorList>
            <consortium name="The rice annotation project (RAP)"/>
        </authorList>
    </citation>
    <scope>GENOME REANNOTATION</scope>
    <source>
        <strain>cv. Nipponbare</strain>
    </source>
</reference>
<reference key="4">
    <citation type="journal article" date="2013" name="Rice">
        <title>Improvement of the Oryza sativa Nipponbare reference genome using next generation sequence and optical map data.</title>
        <authorList>
            <person name="Kawahara Y."/>
            <person name="de la Bastide M."/>
            <person name="Hamilton J.P."/>
            <person name="Kanamori H."/>
            <person name="McCombie W.R."/>
            <person name="Ouyang S."/>
            <person name="Schwartz D.C."/>
            <person name="Tanaka T."/>
            <person name="Wu J."/>
            <person name="Zhou S."/>
            <person name="Childs K.L."/>
            <person name="Davidson R.M."/>
            <person name="Lin H."/>
            <person name="Quesada-Ocampo L."/>
            <person name="Vaillancourt B."/>
            <person name="Sakai H."/>
            <person name="Lee S.S."/>
            <person name="Kim J."/>
            <person name="Numa H."/>
            <person name="Itoh T."/>
            <person name="Buell C.R."/>
            <person name="Matsumoto T."/>
        </authorList>
    </citation>
    <scope>GENOME REANNOTATION</scope>
    <source>
        <strain>cv. Nipponbare</strain>
    </source>
</reference>
<reference key="5">
    <citation type="journal article" date="2008" name="J. Integr. Plant Biol.">
        <title>Phylogenetic analysis of the plant-specific zinc finger-homeobox and mini zinc finger gene families.</title>
        <authorList>
            <person name="Hu W."/>
            <person name="dePamphilis C.W."/>
            <person name="Ma H."/>
        </authorList>
    </citation>
    <scope>GENE FAMILY</scope>
    <scope>NOMENCLATURE</scope>
</reference>
<accession>Q5VM82</accession>
<accession>A0A0P0V5N9</accession>
<name>ZHD5_ORYSJ</name>
<proteinExistence type="inferred from homology"/>
<sequence length="232" mass="25383">MELSEHEEDAGDVGGGCSSPPTPPHRVLTSAAPETIRCRYHECLRNHAAASGGHVVDGCGEFMPASTEEPLACAACGCHRSFHRRDPSPGRAGAARLPQLHLPASINSRAPPALLLPPAAAASKQGLPFPGYGTPSGGTGTTTASSSDERLRPSPVQPRRRSRTTFTREQKEQMLAFAERVGWRIQRQEEATVEHFCAQVGVRRQALKVWMHNNKHSFKQKQQQENRQEQQQ</sequence>